<dbReference type="EC" id="3.2.1.39" evidence="10"/>
<dbReference type="EMBL" id="M58464">
    <property type="protein sequence ID" value="AAA32756.1"/>
    <property type="status" value="ALT_SEQ"/>
    <property type="molecule type" value="Genomic_DNA"/>
</dbReference>
<dbReference type="EMBL" id="AL137080">
    <property type="protein sequence ID" value="CAB68130.1"/>
    <property type="status" value="ALT_SEQ"/>
    <property type="molecule type" value="Genomic_DNA"/>
</dbReference>
<dbReference type="EMBL" id="CP002686">
    <property type="protein sequence ID" value="AEE79631.1"/>
    <property type="molecule type" value="Genomic_DNA"/>
</dbReference>
<dbReference type="PIR" id="T45802">
    <property type="entry name" value="T45802"/>
</dbReference>
<dbReference type="RefSeq" id="NP_191283.2">
    <property type="nucleotide sequence ID" value="NM_115584.5"/>
</dbReference>
<dbReference type="SMR" id="F4J270"/>
<dbReference type="FunCoup" id="F4J270">
    <property type="interactions" value="22"/>
</dbReference>
<dbReference type="STRING" id="3702.F4J270"/>
<dbReference type="CAZy" id="GH17">
    <property type="family name" value="Glycoside Hydrolase Family 17"/>
</dbReference>
<dbReference type="GlyCosmos" id="F4J270">
    <property type="glycosylation" value="1 site, No reported glycans"/>
</dbReference>
<dbReference type="GlyGen" id="F4J270">
    <property type="glycosylation" value="1 site"/>
</dbReference>
<dbReference type="PaxDb" id="3702-AT3G57240.1"/>
<dbReference type="ProteomicsDB" id="240371"/>
<dbReference type="EnsemblPlants" id="AT3G57240.1">
    <property type="protein sequence ID" value="AT3G57240.1"/>
    <property type="gene ID" value="AT3G57240"/>
</dbReference>
<dbReference type="GeneID" id="824891"/>
<dbReference type="Gramene" id="AT3G57240.1">
    <property type="protein sequence ID" value="AT3G57240.1"/>
    <property type="gene ID" value="AT3G57240"/>
</dbReference>
<dbReference type="KEGG" id="ath:AT3G57240"/>
<dbReference type="Araport" id="AT3G57240"/>
<dbReference type="TAIR" id="AT3G57240">
    <property type="gene designation" value="BG3"/>
</dbReference>
<dbReference type="eggNOG" id="ENOG502QQ3M">
    <property type="taxonomic scope" value="Eukaryota"/>
</dbReference>
<dbReference type="HOGENOM" id="CLU_024953_0_0_1"/>
<dbReference type="InParanoid" id="F4J270"/>
<dbReference type="OMA" id="GMFDENQ"/>
<dbReference type="PRO" id="PR:F4J270"/>
<dbReference type="Proteomes" id="UP000006548">
    <property type="component" value="Chromosome 3"/>
</dbReference>
<dbReference type="ExpressionAtlas" id="F4J270">
    <property type="expression patterns" value="baseline and differential"/>
</dbReference>
<dbReference type="GO" id="GO:0048046">
    <property type="term" value="C:apoplast"/>
    <property type="evidence" value="ECO:0007005"/>
    <property type="project" value="TAIR"/>
</dbReference>
<dbReference type="GO" id="GO:0005783">
    <property type="term" value="C:endoplasmic reticulum"/>
    <property type="evidence" value="ECO:0007669"/>
    <property type="project" value="UniProtKB-SubCell"/>
</dbReference>
<dbReference type="GO" id="GO:0099503">
    <property type="term" value="C:secretory vesicle"/>
    <property type="evidence" value="ECO:0007005"/>
    <property type="project" value="TAIR"/>
</dbReference>
<dbReference type="GO" id="GO:0008810">
    <property type="term" value="F:cellulase activity"/>
    <property type="evidence" value="ECO:0000304"/>
    <property type="project" value="TAIR"/>
</dbReference>
<dbReference type="GO" id="GO:0042973">
    <property type="term" value="F:glucan endo-1,3-beta-D-glucosidase activity"/>
    <property type="evidence" value="ECO:0007669"/>
    <property type="project" value="UniProtKB-EC"/>
</dbReference>
<dbReference type="GO" id="GO:0005975">
    <property type="term" value="P:carbohydrate metabolic process"/>
    <property type="evidence" value="ECO:0007669"/>
    <property type="project" value="InterPro"/>
</dbReference>
<dbReference type="GO" id="GO:0009617">
    <property type="term" value="P:response to bacterium"/>
    <property type="evidence" value="ECO:0000270"/>
    <property type="project" value="TAIR"/>
</dbReference>
<dbReference type="FunFam" id="3.20.20.80:FF:000010">
    <property type="entry name" value="glucan endo-1,3-beta-glucosidase, basic"/>
    <property type="match status" value="1"/>
</dbReference>
<dbReference type="Gene3D" id="3.20.20.80">
    <property type="entry name" value="Glycosidases"/>
    <property type="match status" value="1"/>
</dbReference>
<dbReference type="InterPro" id="IPR000490">
    <property type="entry name" value="Glyco_hydro_17"/>
</dbReference>
<dbReference type="InterPro" id="IPR044965">
    <property type="entry name" value="Glyco_hydro_17_plant"/>
</dbReference>
<dbReference type="InterPro" id="IPR017853">
    <property type="entry name" value="Glycoside_hydrolase_SF"/>
</dbReference>
<dbReference type="PANTHER" id="PTHR32227">
    <property type="entry name" value="GLUCAN ENDO-1,3-BETA-GLUCOSIDASE BG1-RELATED-RELATED"/>
    <property type="match status" value="1"/>
</dbReference>
<dbReference type="Pfam" id="PF00332">
    <property type="entry name" value="Glyco_hydro_17"/>
    <property type="match status" value="1"/>
</dbReference>
<dbReference type="SUPFAM" id="SSF51445">
    <property type="entry name" value="(Trans)glycosidases"/>
    <property type="match status" value="1"/>
</dbReference>
<dbReference type="PROSITE" id="PS00587">
    <property type="entry name" value="GLYCOSYL_HYDROL_F17"/>
    <property type="match status" value="1"/>
</dbReference>
<gene>
    <name evidence="8" type="primary">BG3</name>
    <name evidence="12" type="ordered locus">At3g57240</name>
    <name evidence="13" type="ORF">F28O9.90</name>
</gene>
<keyword id="KW-0256">Endoplasmic reticulum</keyword>
<keyword id="KW-0325">Glycoprotein</keyword>
<keyword id="KW-0326">Glycosidase</keyword>
<keyword id="KW-0378">Hydrolase</keyword>
<keyword id="KW-1185">Reference proteome</keyword>
<keyword id="KW-0964">Secreted</keyword>
<keyword id="KW-0732">Signal</keyword>
<sequence>MKMCNGSSFLASLPLLLLLLSFILASFFDTAVGQIGVCYGRNGNNLRPASEVVALYQQRNIRRMRLYDPNQETLNALRGSNIELVLDVPNPDLQRLASSQAEADTWVRNNVRNYANVTFRYISVGNEVQPSDQAASFVLPAMQNIERAVSSLGIKVSTAIDTRGISGFPPSSGTFTPEFRSFIAPVISFLSSKQSPLLVNNYPYFSYTGNMRDIRLDYTLFTAPSTVVNDGQNQYRNLFHAILDTVYASLEKAGGGSLEIVVSESGWPTAGGAATGVDNARTYVNNLIQTVKNGSPRRPGRATETYIFAMFDENSKQGPETEKFWGLFLPNLQPKYVVNFN</sequence>
<evidence type="ECO:0000250" key="1">
    <source>
        <dbReference type="UniProtKB" id="O22317"/>
    </source>
</evidence>
<evidence type="ECO:0000250" key="2">
    <source>
        <dbReference type="UniProtKB" id="P33157"/>
    </source>
</evidence>
<evidence type="ECO:0000255" key="3"/>
<evidence type="ECO:0000255" key="4">
    <source>
        <dbReference type="PROSITE-ProRule" id="PRU00498"/>
    </source>
</evidence>
<evidence type="ECO:0000269" key="5">
    <source>
    </source>
</evidence>
<evidence type="ECO:0000269" key="6">
    <source>
    </source>
</evidence>
<evidence type="ECO:0000269" key="7">
    <source>
    </source>
</evidence>
<evidence type="ECO:0000303" key="8">
    <source>
    </source>
</evidence>
<evidence type="ECO:0000303" key="9">
    <source>
    </source>
</evidence>
<evidence type="ECO:0000305" key="10"/>
<evidence type="ECO:0000305" key="11">
    <source>
    </source>
</evidence>
<evidence type="ECO:0000312" key="12">
    <source>
        <dbReference type="Araport" id="AT3G57240"/>
    </source>
</evidence>
<evidence type="ECO:0000312" key="13">
    <source>
        <dbReference type="EMBL" id="CAB68130.1"/>
    </source>
</evidence>
<name>BG3_ARATH</name>
<proteinExistence type="evidence at transcript level"/>
<reference key="1">
    <citation type="journal article" date="1991" name="Plant Cell">
        <title>Induction of Arabidopsis defense genes by virulent and avirulent Pseudomonas syringae strains and by a cloned avirulence gene.</title>
        <authorList>
            <person name="Dong X."/>
            <person name="Mindrinos M."/>
            <person name="Davis K."/>
            <person name="Ausubel F."/>
        </authorList>
    </citation>
    <scope>NUCLEOTIDE SEQUENCE [GENOMIC DNA]</scope>
    <scope>INDUCTION</scope>
    <source>
        <strain>cv. Landsberg erecta</strain>
    </source>
</reference>
<reference key="2">
    <citation type="journal article" date="2000" name="Nature">
        <title>Sequence and analysis of chromosome 3 of the plant Arabidopsis thaliana.</title>
        <authorList>
            <person name="Salanoubat M."/>
            <person name="Lemcke K."/>
            <person name="Rieger M."/>
            <person name="Ansorge W."/>
            <person name="Unseld M."/>
            <person name="Fartmann B."/>
            <person name="Valle G."/>
            <person name="Bloecker H."/>
            <person name="Perez-Alonso M."/>
            <person name="Obermaier B."/>
            <person name="Delseny M."/>
            <person name="Boutry M."/>
            <person name="Grivell L.A."/>
            <person name="Mache R."/>
            <person name="Puigdomenech P."/>
            <person name="De Simone V."/>
            <person name="Choisne N."/>
            <person name="Artiguenave F."/>
            <person name="Robert C."/>
            <person name="Brottier P."/>
            <person name="Wincker P."/>
            <person name="Cattolico L."/>
            <person name="Weissenbach J."/>
            <person name="Saurin W."/>
            <person name="Quetier F."/>
            <person name="Schaefer M."/>
            <person name="Mueller-Auer S."/>
            <person name="Gabel C."/>
            <person name="Fuchs M."/>
            <person name="Benes V."/>
            <person name="Wurmbach E."/>
            <person name="Drzonek H."/>
            <person name="Erfle H."/>
            <person name="Jordan N."/>
            <person name="Bangert S."/>
            <person name="Wiedelmann R."/>
            <person name="Kranz H."/>
            <person name="Voss H."/>
            <person name="Holland R."/>
            <person name="Brandt P."/>
            <person name="Nyakatura G."/>
            <person name="Vezzi A."/>
            <person name="D'Angelo M."/>
            <person name="Pallavicini A."/>
            <person name="Toppo S."/>
            <person name="Simionati B."/>
            <person name="Conrad A."/>
            <person name="Hornischer K."/>
            <person name="Kauer G."/>
            <person name="Loehnert T.-H."/>
            <person name="Nordsiek G."/>
            <person name="Reichelt J."/>
            <person name="Scharfe M."/>
            <person name="Schoen O."/>
            <person name="Bargues M."/>
            <person name="Terol J."/>
            <person name="Climent J."/>
            <person name="Navarro P."/>
            <person name="Collado C."/>
            <person name="Perez-Perez A."/>
            <person name="Ottenwaelder B."/>
            <person name="Duchemin D."/>
            <person name="Cooke R."/>
            <person name="Laudie M."/>
            <person name="Berger-Llauro C."/>
            <person name="Purnelle B."/>
            <person name="Masuy D."/>
            <person name="de Haan M."/>
            <person name="Maarse A.C."/>
            <person name="Alcaraz J.-P."/>
            <person name="Cottet A."/>
            <person name="Casacuberta E."/>
            <person name="Monfort A."/>
            <person name="Argiriou A."/>
            <person name="Flores M."/>
            <person name="Liguori R."/>
            <person name="Vitale D."/>
            <person name="Mannhaupt G."/>
            <person name="Haase D."/>
            <person name="Schoof H."/>
            <person name="Rudd S."/>
            <person name="Zaccaria P."/>
            <person name="Mewes H.-W."/>
            <person name="Mayer K.F.X."/>
            <person name="Kaul S."/>
            <person name="Town C.D."/>
            <person name="Koo H.L."/>
            <person name="Tallon L.J."/>
            <person name="Jenkins J."/>
            <person name="Rooney T."/>
            <person name="Rizzo M."/>
            <person name="Walts A."/>
            <person name="Utterback T."/>
            <person name="Fujii C.Y."/>
            <person name="Shea T.P."/>
            <person name="Creasy T.H."/>
            <person name="Haas B."/>
            <person name="Maiti R."/>
            <person name="Wu D."/>
            <person name="Peterson J."/>
            <person name="Van Aken S."/>
            <person name="Pai G."/>
            <person name="Militscher J."/>
            <person name="Sellers P."/>
            <person name="Gill J.E."/>
            <person name="Feldblyum T.V."/>
            <person name="Preuss D."/>
            <person name="Lin X."/>
            <person name="Nierman W.C."/>
            <person name="Salzberg S.L."/>
            <person name="White O."/>
            <person name="Venter J.C."/>
            <person name="Fraser C.M."/>
            <person name="Kaneko T."/>
            <person name="Nakamura Y."/>
            <person name="Sato S."/>
            <person name="Kato T."/>
            <person name="Asamizu E."/>
            <person name="Sasamoto S."/>
            <person name="Kimura T."/>
            <person name="Idesawa K."/>
            <person name="Kawashima K."/>
            <person name="Kishida Y."/>
            <person name="Kiyokawa C."/>
            <person name="Kohara M."/>
            <person name="Matsumoto M."/>
            <person name="Matsuno A."/>
            <person name="Muraki A."/>
            <person name="Nakayama S."/>
            <person name="Nakazaki N."/>
            <person name="Shinpo S."/>
            <person name="Takeuchi C."/>
            <person name="Wada T."/>
            <person name="Watanabe A."/>
            <person name="Yamada M."/>
            <person name="Yasuda M."/>
            <person name="Tabata S."/>
        </authorList>
    </citation>
    <scope>NUCLEOTIDE SEQUENCE [LARGE SCALE GENOMIC DNA]</scope>
    <source>
        <strain>cv. Columbia</strain>
    </source>
</reference>
<reference key="3">
    <citation type="journal article" date="2017" name="Plant J.">
        <title>Araport11: a complete reannotation of the Arabidopsis thaliana reference genome.</title>
        <authorList>
            <person name="Cheng C.Y."/>
            <person name="Krishnakumar V."/>
            <person name="Chan A.P."/>
            <person name="Thibaud-Nissen F."/>
            <person name="Schobel S."/>
            <person name="Town C.D."/>
        </authorList>
    </citation>
    <scope>GENOME REANNOTATION</scope>
    <source>
        <strain>cv. Columbia</strain>
    </source>
</reference>
<reference key="4">
    <citation type="journal article" date="2006" name="Plant Cell">
        <title>Arabidopsis PEN3/PDR8, an ATP binding cassette transporter, contributes to nonhost resistance to inappropriate pathogens that enter by direct penetration.</title>
        <authorList>
            <person name="Stein M."/>
            <person name="Dittgen J."/>
            <person name="Sanchez-Rodriguez C."/>
            <person name="Hou B.-H."/>
            <person name="Molina A."/>
            <person name="Schulze-Lefert P."/>
            <person name="Lipka V."/>
            <person name="Somerville S."/>
        </authorList>
    </citation>
    <scope>INDUCTION</scope>
</reference>
<reference key="5">
    <citation type="journal article" date="2013" name="Mol. Plant Microbe Interact.">
        <title>Subcellular dynamics and role of Arabidopsis beta-1,3-glucanases in cell-to-cell movement of tobamoviruses.</title>
        <authorList>
            <person name="Zavaliev R."/>
            <person name="Levy A."/>
            <person name="Gera A."/>
            <person name="Epel B.L."/>
        </authorList>
    </citation>
    <scope>FUNCTION</scope>
    <scope>SUBCELLULAR LOCATION</scope>
    <scope>INDUCTION</scope>
</reference>
<comment type="function">
    <text evidence="11">May play a role in plant defense against pathogens.</text>
</comment>
<comment type="catalytic activity">
    <reaction evidence="10">
        <text>Hydrolysis of (1-&gt;3)-beta-D-glucosidic linkages in (1-&gt;3)-beta-D-glucans.</text>
        <dbReference type="EC" id="3.2.1.39"/>
    </reaction>
</comment>
<comment type="subcellular location">
    <subcellularLocation>
        <location evidence="11">Endoplasmic reticulum</location>
    </subcellularLocation>
    <subcellularLocation>
        <location evidence="2">Secreted</location>
    </subcellularLocation>
</comment>
<comment type="induction">
    <text evidence="5 6 7">By infection with a virulent strain of P.syringae pv. maculicola (PubMed:1824335). Induced by infection with the biotrophic powdery mildew pathogens Golovinomyces cichoracearum and Blumeria graminis (PubMed:16473969). Induced by infection with the turnip vein clearing virus (TVCV) and cucumber mosaic virus (CMV) (PubMed:23656331).</text>
</comment>
<comment type="similarity">
    <text evidence="10">Belongs to the glycosyl hydrolase 17 family.</text>
</comment>
<comment type="sequence caution" evidence="10">
    <conflict type="erroneous gene model prediction">
        <sequence resource="EMBL-CDS" id="AAA32756"/>
    </conflict>
</comment>
<comment type="sequence caution" evidence="10">
    <conflict type="erroneous gene model prediction">
        <sequence resource="EMBL-CDS" id="CAB68130"/>
    </conflict>
</comment>
<protein>
    <recommendedName>
        <fullName evidence="10">Probable glucan endo-1,3-beta-glucosidase BG3</fullName>
        <ecNumber evidence="10">3.2.1.39</ecNumber>
    </recommendedName>
    <alternativeName>
        <fullName evidence="8">Beta-1,3-glucanase 3</fullName>
        <shortName evidence="9">AtBG3</shortName>
    </alternativeName>
</protein>
<organism>
    <name type="scientific">Arabidopsis thaliana</name>
    <name type="common">Mouse-ear cress</name>
    <dbReference type="NCBI Taxonomy" id="3702"/>
    <lineage>
        <taxon>Eukaryota</taxon>
        <taxon>Viridiplantae</taxon>
        <taxon>Streptophyta</taxon>
        <taxon>Embryophyta</taxon>
        <taxon>Tracheophyta</taxon>
        <taxon>Spermatophyta</taxon>
        <taxon>Magnoliopsida</taxon>
        <taxon>eudicotyledons</taxon>
        <taxon>Gunneridae</taxon>
        <taxon>Pentapetalae</taxon>
        <taxon>rosids</taxon>
        <taxon>malvids</taxon>
        <taxon>Brassicales</taxon>
        <taxon>Brassicaceae</taxon>
        <taxon>Camelineae</taxon>
        <taxon>Arabidopsis</taxon>
    </lineage>
</organism>
<feature type="signal peptide" evidence="3">
    <location>
        <begin position="1"/>
        <end position="25"/>
    </location>
</feature>
<feature type="chain" id="PRO_0000434697" description="Probable glucan endo-1,3-beta-glucosidase BG3" evidence="3">
    <location>
        <begin position="26"/>
        <end position="341"/>
    </location>
</feature>
<feature type="active site" description="Proton donor" evidence="1">
    <location>
        <position position="127"/>
    </location>
</feature>
<feature type="active site" description="Nucleophile" evidence="1">
    <location>
        <position position="264"/>
    </location>
</feature>
<feature type="glycosylation site" description="N-linked (GlcNAc...) asparagine" evidence="4">
    <location>
        <position position="116"/>
    </location>
</feature>
<feature type="sequence conflict" description="In Ref. 1; AAA32756." evidence="10" ref="1">
    <original>T</original>
    <variation>I</variation>
    <location>
        <position position="219"/>
    </location>
</feature>
<accession>F4J270</accession>
<accession>Q9M2M3</accession>
<accession>Q9ZRI3</accession>